<reference key="1">
    <citation type="submission" date="2006-03" db="EMBL/GenBank/DDBJ databases">
        <title>Complete sequence of chromosome of Psychrobacter cryohalolentis K5.</title>
        <authorList>
            <consortium name="US DOE Joint Genome Institute"/>
            <person name="Copeland A."/>
            <person name="Lucas S."/>
            <person name="Lapidus A."/>
            <person name="Barry K."/>
            <person name="Detter J.C."/>
            <person name="Glavina T."/>
            <person name="Hammon N."/>
            <person name="Israni S."/>
            <person name="Dalin E."/>
            <person name="Tice H."/>
            <person name="Pitluck S."/>
            <person name="Brettin T."/>
            <person name="Bruce D."/>
            <person name="Han C."/>
            <person name="Tapia R."/>
            <person name="Sims D.R."/>
            <person name="Gilna P."/>
            <person name="Schmutz J."/>
            <person name="Larimer F."/>
            <person name="Land M."/>
            <person name="Hauser L."/>
            <person name="Kyrpides N."/>
            <person name="Kim E."/>
            <person name="Richardson P."/>
        </authorList>
    </citation>
    <scope>NUCLEOTIDE SEQUENCE [LARGE SCALE GENOMIC DNA]</scope>
    <source>
        <strain>ATCC BAA-1226 / DSM 17306 / VKM B-2378 / K5</strain>
    </source>
</reference>
<evidence type="ECO:0000255" key="1">
    <source>
        <dbReference type="HAMAP-Rule" id="MF_00048"/>
    </source>
</evidence>
<dbReference type="EMBL" id="CP000323">
    <property type="protein sequence ID" value="ABE75975.1"/>
    <property type="molecule type" value="Genomic_DNA"/>
</dbReference>
<dbReference type="RefSeq" id="WP_011514508.1">
    <property type="nucleotide sequence ID" value="NC_007969.1"/>
</dbReference>
<dbReference type="SMR" id="Q1Q8M8"/>
<dbReference type="STRING" id="335284.Pcryo_2198"/>
<dbReference type="KEGG" id="pcr:Pcryo_2198"/>
<dbReference type="eggNOG" id="COG0792">
    <property type="taxonomic scope" value="Bacteria"/>
</dbReference>
<dbReference type="HOGENOM" id="CLU_115353_3_0_6"/>
<dbReference type="Proteomes" id="UP000002425">
    <property type="component" value="Chromosome"/>
</dbReference>
<dbReference type="GO" id="GO:0003676">
    <property type="term" value="F:nucleic acid binding"/>
    <property type="evidence" value="ECO:0007669"/>
    <property type="project" value="InterPro"/>
</dbReference>
<dbReference type="Gene3D" id="3.40.1350.10">
    <property type="match status" value="1"/>
</dbReference>
<dbReference type="HAMAP" id="MF_00048">
    <property type="entry name" value="UPF0102"/>
    <property type="match status" value="1"/>
</dbReference>
<dbReference type="InterPro" id="IPR011335">
    <property type="entry name" value="Restrct_endonuc-II-like"/>
</dbReference>
<dbReference type="InterPro" id="IPR011856">
    <property type="entry name" value="tRNA_endonuc-like_dom_sf"/>
</dbReference>
<dbReference type="InterPro" id="IPR003509">
    <property type="entry name" value="UPF0102_YraN-like"/>
</dbReference>
<dbReference type="NCBIfam" id="NF009150">
    <property type="entry name" value="PRK12497.1-3"/>
    <property type="match status" value="1"/>
</dbReference>
<dbReference type="NCBIfam" id="NF011279">
    <property type="entry name" value="PRK14687.1"/>
    <property type="match status" value="1"/>
</dbReference>
<dbReference type="NCBIfam" id="TIGR00252">
    <property type="entry name" value="YraN family protein"/>
    <property type="match status" value="1"/>
</dbReference>
<dbReference type="PANTHER" id="PTHR34039">
    <property type="entry name" value="UPF0102 PROTEIN YRAN"/>
    <property type="match status" value="1"/>
</dbReference>
<dbReference type="PANTHER" id="PTHR34039:SF1">
    <property type="entry name" value="UPF0102 PROTEIN YRAN"/>
    <property type="match status" value="1"/>
</dbReference>
<dbReference type="Pfam" id="PF02021">
    <property type="entry name" value="UPF0102"/>
    <property type="match status" value="1"/>
</dbReference>
<dbReference type="SUPFAM" id="SSF52980">
    <property type="entry name" value="Restriction endonuclease-like"/>
    <property type="match status" value="1"/>
</dbReference>
<gene>
    <name type="ordered locus">Pcryo_2198</name>
</gene>
<accession>Q1Q8M8</accession>
<proteinExistence type="inferred from homology"/>
<name>Y2198_PSYCK</name>
<sequence length="172" mass="20095">MMCYDNSEMLSRLIDVMANDKPLMLTSPKQRQGSRFEQRACEFLQERGLILVAQNWQQPKVGELDLVMLEKGQAWSTLVFVEVRQRQHSYFGDAAISVTAGKQRKIIKAARHFLQQNPQYHKYECRFDVIAYNTMNKKNKNEANITLDNQPNQRLEINQPEWLQGAFITSAW</sequence>
<protein>
    <recommendedName>
        <fullName evidence="1">UPF0102 protein Pcryo_2198</fullName>
    </recommendedName>
</protein>
<organism>
    <name type="scientific">Psychrobacter cryohalolentis (strain ATCC BAA-1226 / DSM 17306 / VKM B-2378 / K5)</name>
    <dbReference type="NCBI Taxonomy" id="335284"/>
    <lineage>
        <taxon>Bacteria</taxon>
        <taxon>Pseudomonadati</taxon>
        <taxon>Pseudomonadota</taxon>
        <taxon>Gammaproteobacteria</taxon>
        <taxon>Moraxellales</taxon>
        <taxon>Moraxellaceae</taxon>
        <taxon>Psychrobacter</taxon>
    </lineage>
</organism>
<feature type="chain" id="PRO_0000336239" description="UPF0102 protein Pcryo_2198">
    <location>
        <begin position="1"/>
        <end position="172"/>
    </location>
</feature>
<comment type="similarity">
    <text evidence="1">Belongs to the UPF0102 family.</text>
</comment>